<sequence length="282" mass="32557">MSSYANHQALAGLTLGKSTDYRDTYDASLLQGVPRSLNRDPLGLKADNLPFHGTDIWTLYELSWLNAKGLPQVAVGHVELDYTSVNLIESKSFKLYLNSFNQTRFNNWDEVRQTLERDLSTCAQGKVSVALYRLDELEGQPIGHFNGTCIDDQDITIDNYEFTTDYLENATSGEKVVEETLVSHLLKSNCLITHQPDWGSIQIQYRGRQIDREKLLRYLVSFRHHNEFHEQCVERIFNDLLRFCQPEKLSVYARYTRRGGLDINPWRSNSDFVPSTTRLVRQ</sequence>
<name>QUEF_ECO55</name>
<proteinExistence type="inferred from homology"/>
<organism>
    <name type="scientific">Escherichia coli (strain 55989 / EAEC)</name>
    <dbReference type="NCBI Taxonomy" id="585055"/>
    <lineage>
        <taxon>Bacteria</taxon>
        <taxon>Pseudomonadati</taxon>
        <taxon>Pseudomonadota</taxon>
        <taxon>Gammaproteobacteria</taxon>
        <taxon>Enterobacterales</taxon>
        <taxon>Enterobacteriaceae</taxon>
        <taxon>Escherichia</taxon>
    </lineage>
</organism>
<accession>B7LEX4</accession>
<reference key="1">
    <citation type="journal article" date="2009" name="PLoS Genet.">
        <title>Organised genome dynamics in the Escherichia coli species results in highly diverse adaptive paths.</title>
        <authorList>
            <person name="Touchon M."/>
            <person name="Hoede C."/>
            <person name="Tenaillon O."/>
            <person name="Barbe V."/>
            <person name="Baeriswyl S."/>
            <person name="Bidet P."/>
            <person name="Bingen E."/>
            <person name="Bonacorsi S."/>
            <person name="Bouchier C."/>
            <person name="Bouvet O."/>
            <person name="Calteau A."/>
            <person name="Chiapello H."/>
            <person name="Clermont O."/>
            <person name="Cruveiller S."/>
            <person name="Danchin A."/>
            <person name="Diard M."/>
            <person name="Dossat C."/>
            <person name="Karoui M.E."/>
            <person name="Frapy E."/>
            <person name="Garry L."/>
            <person name="Ghigo J.M."/>
            <person name="Gilles A.M."/>
            <person name="Johnson J."/>
            <person name="Le Bouguenec C."/>
            <person name="Lescat M."/>
            <person name="Mangenot S."/>
            <person name="Martinez-Jehanne V."/>
            <person name="Matic I."/>
            <person name="Nassif X."/>
            <person name="Oztas S."/>
            <person name="Petit M.A."/>
            <person name="Pichon C."/>
            <person name="Rouy Z."/>
            <person name="Ruf C.S."/>
            <person name="Schneider D."/>
            <person name="Tourret J."/>
            <person name="Vacherie B."/>
            <person name="Vallenet D."/>
            <person name="Medigue C."/>
            <person name="Rocha E.P.C."/>
            <person name="Denamur E."/>
        </authorList>
    </citation>
    <scope>NUCLEOTIDE SEQUENCE [LARGE SCALE GENOMIC DNA]</scope>
    <source>
        <strain>55989 / EAEC</strain>
    </source>
</reference>
<keyword id="KW-0963">Cytoplasm</keyword>
<keyword id="KW-0521">NADP</keyword>
<keyword id="KW-0560">Oxidoreductase</keyword>
<keyword id="KW-0671">Queuosine biosynthesis</keyword>
<keyword id="KW-1185">Reference proteome</keyword>
<comment type="function">
    <text evidence="1">Catalyzes the NADPH-dependent reduction of 7-cyano-7-deazaguanine (preQ0) to 7-aminomethyl-7-deazaguanine (preQ1).</text>
</comment>
<comment type="catalytic activity">
    <reaction evidence="1">
        <text>7-aminomethyl-7-carbaguanine + 2 NADP(+) = 7-cyano-7-deazaguanine + 2 NADPH + 3 H(+)</text>
        <dbReference type="Rhea" id="RHEA:13409"/>
        <dbReference type="ChEBI" id="CHEBI:15378"/>
        <dbReference type="ChEBI" id="CHEBI:45075"/>
        <dbReference type="ChEBI" id="CHEBI:57783"/>
        <dbReference type="ChEBI" id="CHEBI:58349"/>
        <dbReference type="ChEBI" id="CHEBI:58703"/>
        <dbReference type="EC" id="1.7.1.13"/>
    </reaction>
</comment>
<comment type="pathway">
    <text evidence="1">tRNA modification; tRNA-queuosine biosynthesis.</text>
</comment>
<comment type="subunit">
    <text evidence="1">Homodimer.</text>
</comment>
<comment type="subcellular location">
    <subcellularLocation>
        <location evidence="1">Cytoplasm</location>
    </subcellularLocation>
</comment>
<comment type="similarity">
    <text evidence="1">Belongs to the GTP cyclohydrolase I family. QueF type 2 subfamily.</text>
</comment>
<gene>
    <name evidence="1" type="primary">queF</name>
    <name type="ordered locus">EC55989_3073</name>
</gene>
<protein>
    <recommendedName>
        <fullName evidence="1">NADPH-dependent 7-cyano-7-deazaguanine reductase</fullName>
        <ecNumber evidence="1">1.7.1.13</ecNumber>
    </recommendedName>
    <alternativeName>
        <fullName evidence="1">7-cyano-7-carbaguanine reductase</fullName>
    </alternativeName>
    <alternativeName>
        <fullName evidence="1">NADPH-dependent nitrile oxidoreductase</fullName>
    </alternativeName>
    <alternativeName>
        <fullName evidence="1">PreQ(0) reductase</fullName>
    </alternativeName>
</protein>
<dbReference type="EC" id="1.7.1.13" evidence="1"/>
<dbReference type="EMBL" id="CU928145">
    <property type="protein sequence ID" value="CAU98964.1"/>
    <property type="molecule type" value="Genomic_DNA"/>
</dbReference>
<dbReference type="RefSeq" id="WP_000100430.1">
    <property type="nucleotide sequence ID" value="NC_011748.1"/>
</dbReference>
<dbReference type="SMR" id="B7LEX4"/>
<dbReference type="GeneID" id="75203815"/>
<dbReference type="KEGG" id="eck:EC55989_3073"/>
<dbReference type="HOGENOM" id="CLU_054738_0_0_6"/>
<dbReference type="UniPathway" id="UPA00392"/>
<dbReference type="Proteomes" id="UP000000746">
    <property type="component" value="Chromosome"/>
</dbReference>
<dbReference type="GO" id="GO:0005737">
    <property type="term" value="C:cytoplasm"/>
    <property type="evidence" value="ECO:0007669"/>
    <property type="project" value="UniProtKB-SubCell"/>
</dbReference>
<dbReference type="GO" id="GO:0033739">
    <property type="term" value="F:preQ1 synthase activity"/>
    <property type="evidence" value="ECO:0007669"/>
    <property type="project" value="UniProtKB-UniRule"/>
</dbReference>
<dbReference type="GO" id="GO:0008616">
    <property type="term" value="P:queuosine biosynthetic process"/>
    <property type="evidence" value="ECO:0007669"/>
    <property type="project" value="UniProtKB-UniRule"/>
</dbReference>
<dbReference type="GO" id="GO:0006400">
    <property type="term" value="P:tRNA modification"/>
    <property type="evidence" value="ECO:0007669"/>
    <property type="project" value="UniProtKB-UniRule"/>
</dbReference>
<dbReference type="FunFam" id="3.30.1130.10:FF:000004">
    <property type="entry name" value="NADPH-dependent 7-cyano-7-deazaguanine reductase"/>
    <property type="match status" value="1"/>
</dbReference>
<dbReference type="FunFam" id="3.30.1130.10:FF:000006">
    <property type="entry name" value="NADPH-dependent 7-cyano-7-deazaguanine reductase"/>
    <property type="match status" value="1"/>
</dbReference>
<dbReference type="Gene3D" id="3.30.1130.10">
    <property type="match status" value="2"/>
</dbReference>
<dbReference type="HAMAP" id="MF_00817">
    <property type="entry name" value="QueF_type2"/>
    <property type="match status" value="1"/>
</dbReference>
<dbReference type="InterPro" id="IPR043133">
    <property type="entry name" value="GTP-CH-I_C/QueF"/>
</dbReference>
<dbReference type="InterPro" id="IPR050084">
    <property type="entry name" value="NADPH_dep_7-cyano-7-deazaG_red"/>
</dbReference>
<dbReference type="InterPro" id="IPR029500">
    <property type="entry name" value="QueF"/>
</dbReference>
<dbReference type="InterPro" id="IPR029139">
    <property type="entry name" value="QueF_N"/>
</dbReference>
<dbReference type="InterPro" id="IPR016428">
    <property type="entry name" value="QueF_type2"/>
</dbReference>
<dbReference type="NCBIfam" id="TIGR03138">
    <property type="entry name" value="QueF"/>
    <property type="match status" value="1"/>
</dbReference>
<dbReference type="PANTHER" id="PTHR34354">
    <property type="entry name" value="NADPH-DEPENDENT 7-CYANO-7-DEAZAGUANINE REDUCTASE"/>
    <property type="match status" value="1"/>
</dbReference>
<dbReference type="PANTHER" id="PTHR34354:SF1">
    <property type="entry name" value="NADPH-DEPENDENT 7-CYANO-7-DEAZAGUANINE REDUCTASE"/>
    <property type="match status" value="1"/>
</dbReference>
<dbReference type="Pfam" id="PF14489">
    <property type="entry name" value="QueF"/>
    <property type="match status" value="1"/>
</dbReference>
<dbReference type="Pfam" id="PF14819">
    <property type="entry name" value="QueF_N"/>
    <property type="match status" value="1"/>
</dbReference>
<dbReference type="PIRSF" id="PIRSF004750">
    <property type="entry name" value="Nitrile_oxidored_YqcD_prd"/>
    <property type="match status" value="1"/>
</dbReference>
<dbReference type="SUPFAM" id="SSF55620">
    <property type="entry name" value="Tetrahydrobiopterin biosynthesis enzymes-like"/>
    <property type="match status" value="1"/>
</dbReference>
<feature type="chain" id="PRO_1000213057" description="NADPH-dependent 7-cyano-7-deazaguanine reductase">
    <location>
        <begin position="1"/>
        <end position="282"/>
    </location>
</feature>
<feature type="active site" description="Thioimide intermediate" evidence="1">
    <location>
        <position position="190"/>
    </location>
</feature>
<feature type="active site" description="Proton donor" evidence="1">
    <location>
        <position position="197"/>
    </location>
</feature>
<feature type="binding site" evidence="1">
    <location>
        <begin position="88"/>
        <end position="90"/>
    </location>
    <ligand>
        <name>substrate</name>
    </ligand>
</feature>
<feature type="binding site" evidence="1">
    <location>
        <begin position="90"/>
        <end position="91"/>
    </location>
    <ligand>
        <name>NADPH</name>
        <dbReference type="ChEBI" id="CHEBI:57783"/>
    </ligand>
</feature>
<feature type="binding site" evidence="1">
    <location>
        <begin position="229"/>
        <end position="230"/>
    </location>
    <ligand>
        <name>substrate</name>
    </ligand>
</feature>
<feature type="binding site" evidence="1">
    <location>
        <begin position="258"/>
        <end position="259"/>
    </location>
    <ligand>
        <name>NADPH</name>
        <dbReference type="ChEBI" id="CHEBI:57783"/>
    </ligand>
</feature>
<evidence type="ECO:0000255" key="1">
    <source>
        <dbReference type="HAMAP-Rule" id="MF_00817"/>
    </source>
</evidence>